<evidence type="ECO:0000255" key="1">
    <source>
        <dbReference type="HAMAP-Rule" id="MF_00123"/>
    </source>
</evidence>
<comment type="catalytic activity">
    <reaction evidence="1">
        <text>tRNA(Arg) + L-arginine + ATP = L-arginyl-tRNA(Arg) + AMP + diphosphate</text>
        <dbReference type="Rhea" id="RHEA:20301"/>
        <dbReference type="Rhea" id="RHEA-COMP:9658"/>
        <dbReference type="Rhea" id="RHEA-COMP:9673"/>
        <dbReference type="ChEBI" id="CHEBI:30616"/>
        <dbReference type="ChEBI" id="CHEBI:32682"/>
        <dbReference type="ChEBI" id="CHEBI:33019"/>
        <dbReference type="ChEBI" id="CHEBI:78442"/>
        <dbReference type="ChEBI" id="CHEBI:78513"/>
        <dbReference type="ChEBI" id="CHEBI:456215"/>
        <dbReference type="EC" id="6.1.1.19"/>
    </reaction>
</comment>
<comment type="subunit">
    <text evidence="1">Monomer.</text>
</comment>
<comment type="subcellular location">
    <subcellularLocation>
        <location evidence="1">Cytoplasm</location>
    </subcellularLocation>
</comment>
<comment type="similarity">
    <text evidence="1">Belongs to the class-I aminoacyl-tRNA synthetase family.</text>
</comment>
<proteinExistence type="inferred from homology"/>
<feature type="chain" id="PRO_0000151613" description="Arginine--tRNA ligase">
    <location>
        <begin position="1"/>
        <end position="563"/>
    </location>
</feature>
<feature type="short sequence motif" description="'HIGH' region">
    <location>
        <begin position="121"/>
        <end position="131"/>
    </location>
</feature>
<dbReference type="EC" id="6.1.1.19" evidence="1"/>
<dbReference type="EMBL" id="AL766856">
    <property type="protein sequence ID" value="CAD47715.1"/>
    <property type="molecule type" value="Genomic_DNA"/>
</dbReference>
<dbReference type="RefSeq" id="WP_000379867.1">
    <property type="nucleotide sequence ID" value="NC_004368.1"/>
</dbReference>
<dbReference type="SMR" id="Q8E2R1"/>
<dbReference type="KEGG" id="san:argS"/>
<dbReference type="eggNOG" id="COG0018">
    <property type="taxonomic scope" value="Bacteria"/>
</dbReference>
<dbReference type="HOGENOM" id="CLU_006406_6_1_9"/>
<dbReference type="Proteomes" id="UP000000823">
    <property type="component" value="Chromosome"/>
</dbReference>
<dbReference type="GO" id="GO:0005737">
    <property type="term" value="C:cytoplasm"/>
    <property type="evidence" value="ECO:0007669"/>
    <property type="project" value="UniProtKB-SubCell"/>
</dbReference>
<dbReference type="GO" id="GO:0004814">
    <property type="term" value="F:arginine-tRNA ligase activity"/>
    <property type="evidence" value="ECO:0007669"/>
    <property type="project" value="UniProtKB-UniRule"/>
</dbReference>
<dbReference type="GO" id="GO:0005524">
    <property type="term" value="F:ATP binding"/>
    <property type="evidence" value="ECO:0007669"/>
    <property type="project" value="UniProtKB-UniRule"/>
</dbReference>
<dbReference type="GO" id="GO:0006420">
    <property type="term" value="P:arginyl-tRNA aminoacylation"/>
    <property type="evidence" value="ECO:0007669"/>
    <property type="project" value="UniProtKB-UniRule"/>
</dbReference>
<dbReference type="CDD" id="cd07956">
    <property type="entry name" value="Anticodon_Ia_Arg"/>
    <property type="match status" value="1"/>
</dbReference>
<dbReference type="CDD" id="cd00671">
    <property type="entry name" value="ArgRS_core"/>
    <property type="match status" value="1"/>
</dbReference>
<dbReference type="FunFam" id="3.40.50.620:FF:000116">
    <property type="entry name" value="Arginine--tRNA ligase"/>
    <property type="match status" value="1"/>
</dbReference>
<dbReference type="FunFam" id="1.10.730.10:FF:000006">
    <property type="entry name" value="Arginyl-tRNA synthetase 2, mitochondrial"/>
    <property type="match status" value="1"/>
</dbReference>
<dbReference type="Gene3D" id="3.30.1360.70">
    <property type="entry name" value="Arginyl tRNA synthetase N-terminal domain"/>
    <property type="match status" value="1"/>
</dbReference>
<dbReference type="Gene3D" id="3.40.50.620">
    <property type="entry name" value="HUPs"/>
    <property type="match status" value="1"/>
</dbReference>
<dbReference type="Gene3D" id="1.10.730.10">
    <property type="entry name" value="Isoleucyl-tRNA Synthetase, Domain 1"/>
    <property type="match status" value="1"/>
</dbReference>
<dbReference type="HAMAP" id="MF_00123">
    <property type="entry name" value="Arg_tRNA_synth"/>
    <property type="match status" value="1"/>
</dbReference>
<dbReference type="InterPro" id="IPR001278">
    <property type="entry name" value="Arg-tRNA-ligase"/>
</dbReference>
<dbReference type="InterPro" id="IPR005148">
    <property type="entry name" value="Arg-tRNA-synth_N"/>
</dbReference>
<dbReference type="InterPro" id="IPR036695">
    <property type="entry name" value="Arg-tRNA-synth_N_sf"/>
</dbReference>
<dbReference type="InterPro" id="IPR035684">
    <property type="entry name" value="ArgRS_core"/>
</dbReference>
<dbReference type="InterPro" id="IPR008909">
    <property type="entry name" value="DALR_anticod-bd"/>
</dbReference>
<dbReference type="InterPro" id="IPR014729">
    <property type="entry name" value="Rossmann-like_a/b/a_fold"/>
</dbReference>
<dbReference type="InterPro" id="IPR009080">
    <property type="entry name" value="tRNAsynth_Ia_anticodon-bd"/>
</dbReference>
<dbReference type="NCBIfam" id="TIGR00456">
    <property type="entry name" value="argS"/>
    <property type="match status" value="1"/>
</dbReference>
<dbReference type="PANTHER" id="PTHR11956:SF5">
    <property type="entry name" value="ARGININE--TRNA LIGASE, CYTOPLASMIC"/>
    <property type="match status" value="1"/>
</dbReference>
<dbReference type="PANTHER" id="PTHR11956">
    <property type="entry name" value="ARGINYL-TRNA SYNTHETASE"/>
    <property type="match status" value="1"/>
</dbReference>
<dbReference type="Pfam" id="PF03485">
    <property type="entry name" value="Arg_tRNA_synt_N"/>
    <property type="match status" value="1"/>
</dbReference>
<dbReference type="Pfam" id="PF05746">
    <property type="entry name" value="DALR_1"/>
    <property type="match status" value="1"/>
</dbReference>
<dbReference type="Pfam" id="PF00750">
    <property type="entry name" value="tRNA-synt_1d"/>
    <property type="match status" value="1"/>
</dbReference>
<dbReference type="PRINTS" id="PR01038">
    <property type="entry name" value="TRNASYNTHARG"/>
</dbReference>
<dbReference type="SMART" id="SM01016">
    <property type="entry name" value="Arg_tRNA_synt_N"/>
    <property type="match status" value="1"/>
</dbReference>
<dbReference type="SMART" id="SM00836">
    <property type="entry name" value="DALR_1"/>
    <property type="match status" value="1"/>
</dbReference>
<dbReference type="SUPFAM" id="SSF47323">
    <property type="entry name" value="Anticodon-binding domain of a subclass of class I aminoacyl-tRNA synthetases"/>
    <property type="match status" value="1"/>
</dbReference>
<dbReference type="SUPFAM" id="SSF55190">
    <property type="entry name" value="Arginyl-tRNA synthetase (ArgRS), N-terminal 'additional' domain"/>
    <property type="match status" value="1"/>
</dbReference>
<dbReference type="SUPFAM" id="SSF52374">
    <property type="entry name" value="Nucleotidylyl transferase"/>
    <property type="match status" value="1"/>
</dbReference>
<reference key="1">
    <citation type="journal article" date="2002" name="Mol. Microbiol.">
        <title>Genome sequence of Streptococcus agalactiae, a pathogen causing invasive neonatal disease.</title>
        <authorList>
            <person name="Glaser P."/>
            <person name="Rusniok C."/>
            <person name="Buchrieser C."/>
            <person name="Chevalier F."/>
            <person name="Frangeul L."/>
            <person name="Msadek T."/>
            <person name="Zouine M."/>
            <person name="Couve E."/>
            <person name="Lalioui L."/>
            <person name="Poyart C."/>
            <person name="Trieu-Cuot P."/>
            <person name="Kunst F."/>
        </authorList>
    </citation>
    <scope>NUCLEOTIDE SEQUENCE [LARGE SCALE GENOMIC DNA]</scope>
    <source>
        <strain>NEM316</strain>
    </source>
</reference>
<protein>
    <recommendedName>
        <fullName evidence="1">Arginine--tRNA ligase</fullName>
        <ecNumber evidence="1">6.1.1.19</ecNumber>
    </recommendedName>
    <alternativeName>
        <fullName evidence="1">Arginyl-tRNA synthetase</fullName>
        <shortName evidence="1">ArgRS</shortName>
    </alternativeName>
</protein>
<accession>Q8E2R1</accession>
<name>SYR_STRA3</name>
<sequence>MDTKHLIASEIQKVVPDMEQSTILSLLETPKNSSMGDLAFPAFSLAKTLRKAPQIIASDIAEQIKSDQFEKVEAVGPYVNFFLDKAAISSQVLKQVLSDGSAYATQNIGEGRNVAIDMSSPNIAKPFSIGHLRSTVIGDSLANIFDKIGYHPVKINHLGDWGKQFGMLIVAYKKWGNEEAVRAHPIDELLKLYVRINAEAETDPSVDEEAREWFRKLEANDPEATELWQWFRDESLLEFNRLYDQMNVTFDSYNGEAFYNDKMDEVLELLESKNLLVESKGAQVVNLEKYGIEHPALIKKSDGATLYITRDLAAALYRKRTYDFAKSIYVVGNEQSAHFKQLKAVLKEMDYDWSDDMTHVPFGLVTKGGAKLSTRKGNVILLEPTVAEAINRAASQIEAKNPNLADKDKVAQAVGVGAIKFYDLKTDRTNGYDFDLEAMVSFEGETGPYVQYAHARIQSILRKANFNPSNSDNYSLNDVESWEIIKLIQDFPRIIVRAADNFEPSIIAKFAINLAQCFNKYYAHTRILDEDAEISSRLALCYATATVLKESLRLLGVDAPNEM</sequence>
<keyword id="KW-0030">Aminoacyl-tRNA synthetase</keyword>
<keyword id="KW-0067">ATP-binding</keyword>
<keyword id="KW-0963">Cytoplasm</keyword>
<keyword id="KW-0436">Ligase</keyword>
<keyword id="KW-0547">Nucleotide-binding</keyword>
<keyword id="KW-0648">Protein biosynthesis</keyword>
<gene>
    <name evidence="1" type="primary">argS</name>
    <name type="ordered locus">gbs2056</name>
</gene>
<organism>
    <name type="scientific">Streptococcus agalactiae serotype III (strain NEM316)</name>
    <dbReference type="NCBI Taxonomy" id="211110"/>
    <lineage>
        <taxon>Bacteria</taxon>
        <taxon>Bacillati</taxon>
        <taxon>Bacillota</taxon>
        <taxon>Bacilli</taxon>
        <taxon>Lactobacillales</taxon>
        <taxon>Streptococcaceae</taxon>
        <taxon>Streptococcus</taxon>
    </lineage>
</organism>